<organism>
    <name type="scientific">Salmonella newport (strain SL254)</name>
    <dbReference type="NCBI Taxonomy" id="423368"/>
    <lineage>
        <taxon>Bacteria</taxon>
        <taxon>Pseudomonadati</taxon>
        <taxon>Pseudomonadota</taxon>
        <taxon>Gammaproteobacteria</taxon>
        <taxon>Enterobacterales</taxon>
        <taxon>Enterobacteriaceae</taxon>
        <taxon>Salmonella</taxon>
    </lineage>
</organism>
<keyword id="KW-0997">Cell inner membrane</keyword>
<keyword id="KW-1003">Cell membrane</keyword>
<keyword id="KW-0472">Membrane</keyword>
<keyword id="KW-0812">Transmembrane</keyword>
<keyword id="KW-1133">Transmembrane helix</keyword>
<keyword id="KW-0813">Transport</keyword>
<dbReference type="EMBL" id="CP001113">
    <property type="protein sequence ID" value="ACF64517.1"/>
    <property type="molecule type" value="Genomic_DNA"/>
</dbReference>
<dbReference type="RefSeq" id="WP_000855134.1">
    <property type="nucleotide sequence ID" value="NZ_CCMR01000001.1"/>
</dbReference>
<dbReference type="SMR" id="B4T775"/>
<dbReference type="KEGG" id="see:SNSL254_A3628"/>
<dbReference type="HOGENOM" id="CLU_018816_15_2_6"/>
<dbReference type="Proteomes" id="UP000008824">
    <property type="component" value="Chromosome"/>
</dbReference>
<dbReference type="GO" id="GO:0005886">
    <property type="term" value="C:plasma membrane"/>
    <property type="evidence" value="ECO:0007669"/>
    <property type="project" value="UniProtKB-SubCell"/>
</dbReference>
<dbReference type="GO" id="GO:0022857">
    <property type="term" value="F:transmembrane transporter activity"/>
    <property type="evidence" value="ECO:0007669"/>
    <property type="project" value="UniProtKB-UniRule"/>
</dbReference>
<dbReference type="FunFam" id="2.40.30.170:FF:000002">
    <property type="entry name" value="p-hydroxybenzoic acid efflux pump subunit AaeA"/>
    <property type="match status" value="1"/>
</dbReference>
<dbReference type="FunFam" id="2.40.50.100:FF:000018">
    <property type="entry name" value="p-hydroxybenzoic acid efflux pump subunit AaeA"/>
    <property type="match status" value="1"/>
</dbReference>
<dbReference type="Gene3D" id="2.40.30.170">
    <property type="match status" value="1"/>
</dbReference>
<dbReference type="Gene3D" id="2.40.50.100">
    <property type="match status" value="1"/>
</dbReference>
<dbReference type="HAMAP" id="MF_01544">
    <property type="entry name" value="AaeA"/>
    <property type="match status" value="1"/>
</dbReference>
<dbReference type="InterPro" id="IPR043602">
    <property type="entry name" value="CusB-like_dom_1"/>
</dbReference>
<dbReference type="InterPro" id="IPR032317">
    <property type="entry name" value="CusB_D23"/>
</dbReference>
<dbReference type="InterPro" id="IPR050393">
    <property type="entry name" value="MFP_Efflux_Pump"/>
</dbReference>
<dbReference type="InterPro" id="IPR022871">
    <property type="entry name" value="PHBA_efflux_pump_AaeA"/>
</dbReference>
<dbReference type="InterPro" id="IPR006143">
    <property type="entry name" value="RND_pump_MFP"/>
</dbReference>
<dbReference type="NCBIfam" id="NF007850">
    <property type="entry name" value="PRK10559.1"/>
    <property type="match status" value="1"/>
</dbReference>
<dbReference type="NCBIfam" id="TIGR01730">
    <property type="entry name" value="RND_mfp"/>
    <property type="match status" value="1"/>
</dbReference>
<dbReference type="PANTHER" id="PTHR30367:SF12">
    <property type="entry name" value="P-HYDROXYBENZOIC ACID EFFLUX PUMP SUBUNIT AAEA"/>
    <property type="match status" value="1"/>
</dbReference>
<dbReference type="PANTHER" id="PTHR30367">
    <property type="entry name" value="P-HYDROXYBENZOIC ACID EFFLUX PUMP SUBUNIT AAEA-RELATED"/>
    <property type="match status" value="1"/>
</dbReference>
<dbReference type="Pfam" id="PF00529">
    <property type="entry name" value="CusB_dom_1"/>
    <property type="match status" value="1"/>
</dbReference>
<dbReference type="Pfam" id="PF16576">
    <property type="entry name" value="HlyD_D23"/>
    <property type="match status" value="1"/>
</dbReference>
<dbReference type="SUPFAM" id="SSF111369">
    <property type="entry name" value="HlyD-like secretion proteins"/>
    <property type="match status" value="1"/>
</dbReference>
<accession>B4T775</accession>
<evidence type="ECO:0000255" key="1">
    <source>
        <dbReference type="HAMAP-Rule" id="MF_01544"/>
    </source>
</evidence>
<proteinExistence type="inferred from homology"/>
<name>AAEA_SALNS</name>
<gene>
    <name evidence="1" type="primary">aaeA</name>
    <name type="ordered locus">SNSL254_A3628</name>
</gene>
<feature type="chain" id="PRO_1000146727" description="p-hydroxybenzoic acid efflux pump subunit AaeA">
    <location>
        <begin position="1"/>
        <end position="310"/>
    </location>
</feature>
<feature type="transmembrane region" description="Helical" evidence="1">
    <location>
        <begin position="12"/>
        <end position="32"/>
    </location>
</feature>
<protein>
    <recommendedName>
        <fullName evidence="1">p-hydroxybenzoic acid efflux pump subunit AaeA</fullName>
        <shortName evidence="1">pHBA efflux pump protein A</shortName>
    </recommendedName>
</protein>
<reference key="1">
    <citation type="journal article" date="2011" name="J. Bacteriol.">
        <title>Comparative genomics of 28 Salmonella enterica isolates: evidence for CRISPR-mediated adaptive sublineage evolution.</title>
        <authorList>
            <person name="Fricke W.F."/>
            <person name="Mammel M.K."/>
            <person name="McDermott P.F."/>
            <person name="Tartera C."/>
            <person name="White D.G."/>
            <person name="Leclerc J.E."/>
            <person name="Ravel J."/>
            <person name="Cebula T.A."/>
        </authorList>
    </citation>
    <scope>NUCLEOTIDE SEQUENCE [LARGE SCALE GENOMIC DNA]</scope>
    <source>
        <strain>SL254</strain>
    </source>
</reference>
<sequence length="310" mass="34545">MKTLTRKLSRTAITLVLVILAFIAIFRAWVYYTESPWTRDARFSADVVAIAPDVAGLITHVNVHDNQLVKKDQVLFTIDQPRYQKALAEAEADVAYYQVLAQEKRQEAGRRNRLGVQAMSREEIDQANNVLQTVLHQLAKAQATRDLAKLDLERTVIRAPADGWVTNLNVYAGEFITRGSTAVALVKKNSFYVQAYMEETKLEGVRPGYRAEITPLGSNRVLKGTVDSVAAGVTNASSTSDAKGMATIDSNLEWVRLAQRVPVRIRLDEQQGNLWPAGTTATVVITGKQDRDASQDSFFRKLAHRLREFG</sequence>
<comment type="function">
    <text evidence="1">Forms an efflux pump with AaeB.</text>
</comment>
<comment type="subcellular location">
    <subcellularLocation>
        <location evidence="1">Cell inner membrane</location>
        <topology evidence="1">Single-pass membrane protein</topology>
    </subcellularLocation>
</comment>
<comment type="similarity">
    <text evidence="1">Belongs to the membrane fusion protein (MFP) (TC 8.A.1) family.</text>
</comment>